<sequence>MSNSNIHPTAVIAEGANLGKNVKIGPYCIIGAEVVLNDNVELKSHVVIEGITEIGENTIIYPFASIGQPPQILKYANERSSTIIGSNNTIREYVTVQAGSQGGGMITRIGNNNLFMVGVHVGHDCKIGNNVVFANYVSLAGHIEVGDYVIISGLSAVHQYARIGKYSMIGGLSPVGSDVIPFGLVSSKRAVLEGLNLIGMNRKGFDKAESLSALKAIKEIFSSEGNFAERIKQVAEKYKNNSIVMQIIDFLNQDSSRAFCHFEK</sequence>
<evidence type="ECO:0000255" key="1">
    <source>
        <dbReference type="HAMAP-Rule" id="MF_00387"/>
    </source>
</evidence>
<protein>
    <recommendedName>
        <fullName evidence="1">Acyl-[acyl-carrier-protein]--UDP-N-acetylglucosamine O-acyltransferase</fullName>
        <shortName evidence="1">UDP-N-acetylglucosamine acyltransferase</shortName>
        <ecNumber evidence="1">2.3.1.129</ecNumber>
    </recommendedName>
</protein>
<keyword id="KW-0012">Acyltransferase</keyword>
<keyword id="KW-0963">Cytoplasm</keyword>
<keyword id="KW-0441">Lipid A biosynthesis</keyword>
<keyword id="KW-0444">Lipid biosynthesis</keyword>
<keyword id="KW-0443">Lipid metabolism</keyword>
<keyword id="KW-0677">Repeat</keyword>
<keyword id="KW-0808">Transferase</keyword>
<reference key="1">
    <citation type="submission" date="2007-09" db="EMBL/GenBank/DDBJ databases">
        <title>Complete genome sequence of Rickettsia canadensis.</title>
        <authorList>
            <person name="Madan A."/>
            <person name="Fahey J."/>
            <person name="Helton E."/>
            <person name="Ketteman M."/>
            <person name="Madan A."/>
            <person name="Rodrigues S."/>
            <person name="Sanchez A."/>
            <person name="Whiting M."/>
            <person name="Dasch G."/>
            <person name="Eremeeva M."/>
        </authorList>
    </citation>
    <scope>NUCLEOTIDE SEQUENCE [LARGE SCALE GENOMIC DNA]</scope>
    <source>
        <strain>McKiel</strain>
    </source>
</reference>
<feature type="chain" id="PRO_1000013178" description="Acyl-[acyl-carrier-protein]--UDP-N-acetylglucosamine O-acyltransferase">
    <location>
        <begin position="1"/>
        <end position="264"/>
    </location>
</feature>
<proteinExistence type="inferred from homology"/>
<name>LPXA_RICCK</name>
<comment type="function">
    <text evidence="1">Involved in the biosynthesis of lipid A, a phosphorylated glycolipid that anchors the lipopolysaccharide to the outer membrane of the cell.</text>
</comment>
<comment type="catalytic activity">
    <reaction evidence="1">
        <text>a (3R)-hydroxyacyl-[ACP] + UDP-N-acetyl-alpha-D-glucosamine = a UDP-3-O-[(3R)-3-hydroxyacyl]-N-acetyl-alpha-D-glucosamine + holo-[ACP]</text>
        <dbReference type="Rhea" id="RHEA:67812"/>
        <dbReference type="Rhea" id="RHEA-COMP:9685"/>
        <dbReference type="Rhea" id="RHEA-COMP:9945"/>
        <dbReference type="ChEBI" id="CHEBI:57705"/>
        <dbReference type="ChEBI" id="CHEBI:64479"/>
        <dbReference type="ChEBI" id="CHEBI:78827"/>
        <dbReference type="ChEBI" id="CHEBI:173225"/>
        <dbReference type="EC" id="2.3.1.129"/>
    </reaction>
</comment>
<comment type="pathway">
    <text evidence="1">Glycolipid biosynthesis; lipid IV(A) biosynthesis; lipid IV(A) from (3R)-3-hydroxytetradecanoyl-[acyl-carrier-protein] and UDP-N-acetyl-alpha-D-glucosamine: step 1/6.</text>
</comment>
<comment type="subunit">
    <text evidence="1">Homotrimer.</text>
</comment>
<comment type="subcellular location">
    <subcellularLocation>
        <location evidence="1">Cytoplasm</location>
    </subcellularLocation>
</comment>
<comment type="similarity">
    <text evidence="1">Belongs to the transferase hexapeptide repeat family. LpxA subfamily.</text>
</comment>
<accession>A8EX76</accession>
<dbReference type="EC" id="2.3.1.129" evidence="1"/>
<dbReference type="EMBL" id="CP000409">
    <property type="protein sequence ID" value="ABV72959.1"/>
    <property type="molecule type" value="Genomic_DNA"/>
</dbReference>
<dbReference type="RefSeq" id="WP_012148160.1">
    <property type="nucleotide sequence ID" value="NC_009879.1"/>
</dbReference>
<dbReference type="SMR" id="A8EX76"/>
<dbReference type="STRING" id="293613.A1E_00030"/>
<dbReference type="KEGG" id="rcm:A1E_00030"/>
<dbReference type="eggNOG" id="COG1043">
    <property type="taxonomic scope" value="Bacteria"/>
</dbReference>
<dbReference type="HOGENOM" id="CLU_061249_0_0_5"/>
<dbReference type="UniPathway" id="UPA00359">
    <property type="reaction ID" value="UER00477"/>
</dbReference>
<dbReference type="Proteomes" id="UP000007056">
    <property type="component" value="Chromosome"/>
</dbReference>
<dbReference type="GO" id="GO:0005737">
    <property type="term" value="C:cytoplasm"/>
    <property type="evidence" value="ECO:0007669"/>
    <property type="project" value="UniProtKB-SubCell"/>
</dbReference>
<dbReference type="GO" id="GO:0016020">
    <property type="term" value="C:membrane"/>
    <property type="evidence" value="ECO:0007669"/>
    <property type="project" value="GOC"/>
</dbReference>
<dbReference type="GO" id="GO:0008780">
    <property type="term" value="F:acyl-[acyl-carrier-protein]-UDP-N-acetylglucosamine O-acyltransferase activity"/>
    <property type="evidence" value="ECO:0007669"/>
    <property type="project" value="UniProtKB-UniRule"/>
</dbReference>
<dbReference type="GO" id="GO:0009245">
    <property type="term" value="P:lipid A biosynthetic process"/>
    <property type="evidence" value="ECO:0007669"/>
    <property type="project" value="UniProtKB-UniRule"/>
</dbReference>
<dbReference type="CDD" id="cd03351">
    <property type="entry name" value="LbH_UDP-GlcNAc_AT"/>
    <property type="match status" value="1"/>
</dbReference>
<dbReference type="Gene3D" id="2.160.10.10">
    <property type="entry name" value="Hexapeptide repeat proteins"/>
    <property type="match status" value="1"/>
</dbReference>
<dbReference type="Gene3D" id="1.20.1180.10">
    <property type="entry name" value="Udp N-acetylglucosamine O-acyltransferase, C-terminal domain"/>
    <property type="match status" value="1"/>
</dbReference>
<dbReference type="HAMAP" id="MF_00387">
    <property type="entry name" value="LpxA"/>
    <property type="match status" value="1"/>
</dbReference>
<dbReference type="InterPro" id="IPR029098">
    <property type="entry name" value="Acetyltransf_C"/>
</dbReference>
<dbReference type="InterPro" id="IPR037157">
    <property type="entry name" value="Acetyltransf_C_sf"/>
</dbReference>
<dbReference type="InterPro" id="IPR001451">
    <property type="entry name" value="Hexapep"/>
</dbReference>
<dbReference type="InterPro" id="IPR010137">
    <property type="entry name" value="Lipid_A_LpxA"/>
</dbReference>
<dbReference type="InterPro" id="IPR011004">
    <property type="entry name" value="Trimer_LpxA-like_sf"/>
</dbReference>
<dbReference type="NCBIfam" id="TIGR01852">
    <property type="entry name" value="lipid_A_lpxA"/>
    <property type="match status" value="1"/>
</dbReference>
<dbReference type="NCBIfam" id="NF003657">
    <property type="entry name" value="PRK05289.1"/>
    <property type="match status" value="1"/>
</dbReference>
<dbReference type="PANTHER" id="PTHR43480">
    <property type="entry name" value="ACYL-[ACYL-CARRIER-PROTEIN]--UDP-N-ACETYLGLUCOSAMINE O-ACYLTRANSFERASE"/>
    <property type="match status" value="1"/>
</dbReference>
<dbReference type="PANTHER" id="PTHR43480:SF1">
    <property type="entry name" value="ACYL-[ACYL-CARRIER-PROTEIN]--UDP-N-ACETYLGLUCOSAMINE O-ACYLTRANSFERASE, MITOCHONDRIAL-RELATED"/>
    <property type="match status" value="1"/>
</dbReference>
<dbReference type="Pfam" id="PF13720">
    <property type="entry name" value="Acetyltransf_11"/>
    <property type="match status" value="1"/>
</dbReference>
<dbReference type="Pfam" id="PF00132">
    <property type="entry name" value="Hexapep"/>
    <property type="match status" value="2"/>
</dbReference>
<dbReference type="PIRSF" id="PIRSF000456">
    <property type="entry name" value="UDP-GlcNAc_acltr"/>
    <property type="match status" value="1"/>
</dbReference>
<dbReference type="SUPFAM" id="SSF51161">
    <property type="entry name" value="Trimeric LpxA-like enzymes"/>
    <property type="match status" value="1"/>
</dbReference>
<organism>
    <name type="scientific">Rickettsia canadensis (strain McKiel)</name>
    <dbReference type="NCBI Taxonomy" id="293613"/>
    <lineage>
        <taxon>Bacteria</taxon>
        <taxon>Pseudomonadati</taxon>
        <taxon>Pseudomonadota</taxon>
        <taxon>Alphaproteobacteria</taxon>
        <taxon>Rickettsiales</taxon>
        <taxon>Rickettsiaceae</taxon>
        <taxon>Rickettsieae</taxon>
        <taxon>Rickettsia</taxon>
        <taxon>belli group</taxon>
    </lineage>
</organism>
<gene>
    <name evidence="1" type="primary">lpxA</name>
    <name type="ordered locus">A1E_00030</name>
</gene>